<feature type="chain" id="PRO_1000166091" description="Large ribosomal subunit protein uL22">
    <location>
        <begin position="1"/>
        <end position="118"/>
    </location>
</feature>
<proteinExistence type="inferred from homology"/>
<evidence type="ECO:0000255" key="1">
    <source>
        <dbReference type="HAMAP-Rule" id="MF_01331"/>
    </source>
</evidence>
<evidence type="ECO:0000305" key="2"/>
<name>RL22_THERP</name>
<comment type="function">
    <text evidence="1">This protein binds specifically to 23S rRNA; its binding is stimulated by other ribosomal proteins, e.g. L4, L17, and L20. It is important during the early stages of 50S assembly. It makes multiple contacts with different domains of the 23S rRNA in the assembled 50S subunit and ribosome (By similarity).</text>
</comment>
<comment type="function">
    <text evidence="1">The globular domain of the protein is located near the polypeptide exit tunnel on the outside of the subunit, while an extended beta-hairpin is found that lines the wall of the exit tunnel in the center of the 70S ribosome.</text>
</comment>
<comment type="subunit">
    <text evidence="1">Part of the 50S ribosomal subunit.</text>
</comment>
<comment type="similarity">
    <text evidence="1">Belongs to the universal ribosomal protein uL22 family.</text>
</comment>
<reference key="1">
    <citation type="journal article" date="2009" name="PLoS ONE">
        <title>Complete genome sequence of the aerobic CO-oxidizing thermophile Thermomicrobium roseum.</title>
        <authorList>
            <person name="Wu D."/>
            <person name="Raymond J."/>
            <person name="Wu M."/>
            <person name="Chatterji S."/>
            <person name="Ren Q."/>
            <person name="Graham J.E."/>
            <person name="Bryant D.A."/>
            <person name="Robb F."/>
            <person name="Colman A."/>
            <person name="Tallon L.J."/>
            <person name="Badger J.H."/>
            <person name="Madupu R."/>
            <person name="Ward N.L."/>
            <person name="Eisen J.A."/>
        </authorList>
    </citation>
    <scope>NUCLEOTIDE SEQUENCE [LARGE SCALE GENOMIC DNA]</scope>
    <source>
        <strain>ATCC 27502 / DSM 5159 / P-2</strain>
    </source>
</reference>
<keyword id="KW-1185">Reference proteome</keyword>
<keyword id="KW-0687">Ribonucleoprotein</keyword>
<keyword id="KW-0689">Ribosomal protein</keyword>
<keyword id="KW-0694">RNA-binding</keyword>
<keyword id="KW-0699">rRNA-binding</keyword>
<protein>
    <recommendedName>
        <fullName evidence="1">Large ribosomal subunit protein uL22</fullName>
    </recommendedName>
    <alternativeName>
        <fullName evidence="2">50S ribosomal protein L22</fullName>
    </alternativeName>
</protein>
<sequence length="118" mass="13597">MEVRAMVREVRVSPQKARMVIDVIRGKPLRDALAVLQVLPQKTAPIALKLLRSAAANAEHNYDLDPDRLYVKRIYVDEGPRYKRWQPHARGRVGRKWRRTSHITVILDELPEKGAPRG</sequence>
<dbReference type="EMBL" id="CP001275">
    <property type="protein sequence ID" value="ACM05032.1"/>
    <property type="molecule type" value="Genomic_DNA"/>
</dbReference>
<dbReference type="RefSeq" id="WP_015921943.1">
    <property type="nucleotide sequence ID" value="NC_011959.1"/>
</dbReference>
<dbReference type="SMR" id="B9KZY2"/>
<dbReference type="STRING" id="309801.trd_0979"/>
<dbReference type="KEGG" id="tro:trd_0979"/>
<dbReference type="eggNOG" id="COG0091">
    <property type="taxonomic scope" value="Bacteria"/>
</dbReference>
<dbReference type="HOGENOM" id="CLU_083987_3_3_0"/>
<dbReference type="OrthoDB" id="9805969at2"/>
<dbReference type="Proteomes" id="UP000000447">
    <property type="component" value="Chromosome"/>
</dbReference>
<dbReference type="GO" id="GO:0022625">
    <property type="term" value="C:cytosolic large ribosomal subunit"/>
    <property type="evidence" value="ECO:0007669"/>
    <property type="project" value="TreeGrafter"/>
</dbReference>
<dbReference type="GO" id="GO:0019843">
    <property type="term" value="F:rRNA binding"/>
    <property type="evidence" value="ECO:0007669"/>
    <property type="project" value="UniProtKB-UniRule"/>
</dbReference>
<dbReference type="GO" id="GO:0003735">
    <property type="term" value="F:structural constituent of ribosome"/>
    <property type="evidence" value="ECO:0007669"/>
    <property type="project" value="InterPro"/>
</dbReference>
<dbReference type="GO" id="GO:0006412">
    <property type="term" value="P:translation"/>
    <property type="evidence" value="ECO:0007669"/>
    <property type="project" value="UniProtKB-UniRule"/>
</dbReference>
<dbReference type="CDD" id="cd00336">
    <property type="entry name" value="Ribosomal_L22"/>
    <property type="match status" value="1"/>
</dbReference>
<dbReference type="Gene3D" id="3.90.470.10">
    <property type="entry name" value="Ribosomal protein L22/L17"/>
    <property type="match status" value="1"/>
</dbReference>
<dbReference type="HAMAP" id="MF_01331_B">
    <property type="entry name" value="Ribosomal_uL22_B"/>
    <property type="match status" value="1"/>
</dbReference>
<dbReference type="InterPro" id="IPR001063">
    <property type="entry name" value="Ribosomal_uL22"/>
</dbReference>
<dbReference type="InterPro" id="IPR005727">
    <property type="entry name" value="Ribosomal_uL22_bac/chlpt-type"/>
</dbReference>
<dbReference type="InterPro" id="IPR047867">
    <property type="entry name" value="Ribosomal_uL22_bac/org-type"/>
</dbReference>
<dbReference type="InterPro" id="IPR018260">
    <property type="entry name" value="Ribosomal_uL22_CS"/>
</dbReference>
<dbReference type="InterPro" id="IPR036394">
    <property type="entry name" value="Ribosomal_uL22_sf"/>
</dbReference>
<dbReference type="NCBIfam" id="TIGR01044">
    <property type="entry name" value="rplV_bact"/>
    <property type="match status" value="1"/>
</dbReference>
<dbReference type="PANTHER" id="PTHR13501">
    <property type="entry name" value="CHLOROPLAST 50S RIBOSOMAL PROTEIN L22-RELATED"/>
    <property type="match status" value="1"/>
</dbReference>
<dbReference type="PANTHER" id="PTHR13501:SF8">
    <property type="entry name" value="LARGE RIBOSOMAL SUBUNIT PROTEIN UL22M"/>
    <property type="match status" value="1"/>
</dbReference>
<dbReference type="Pfam" id="PF00237">
    <property type="entry name" value="Ribosomal_L22"/>
    <property type="match status" value="1"/>
</dbReference>
<dbReference type="SUPFAM" id="SSF54843">
    <property type="entry name" value="Ribosomal protein L22"/>
    <property type="match status" value="1"/>
</dbReference>
<dbReference type="PROSITE" id="PS00464">
    <property type="entry name" value="RIBOSOMAL_L22"/>
    <property type="match status" value="1"/>
</dbReference>
<accession>B9KZY2</accession>
<gene>
    <name evidence="1" type="primary">rplV</name>
    <name type="ordered locus">trd_0979</name>
</gene>
<organism>
    <name type="scientific">Thermomicrobium roseum (strain ATCC 27502 / DSM 5159 / P-2)</name>
    <dbReference type="NCBI Taxonomy" id="309801"/>
    <lineage>
        <taxon>Bacteria</taxon>
        <taxon>Pseudomonadati</taxon>
        <taxon>Thermomicrobiota</taxon>
        <taxon>Thermomicrobia</taxon>
        <taxon>Thermomicrobiales</taxon>
        <taxon>Thermomicrobiaceae</taxon>
        <taxon>Thermomicrobium</taxon>
    </lineage>
</organism>